<sequence>MSVSRRVIHHGLYFAVLGPLIGVLFLVLYIFFAKEPLVLLVIIQVLPLFLLLSITTGAIPALLTGVMVACLPEKIGSQKNYRCLAGGIGGVVITEIYCAVIVHIKGMASSELFENILSGDSLVVRIIPALLAGVVMSRIITRLPGLDISCPETDSLS</sequence>
<evidence type="ECO:0000250" key="1"/>
<evidence type="ECO:0000255" key="2"/>
<evidence type="ECO:0000305" key="3"/>
<feature type="chain" id="PRO_0000320703" description="Inner membrane protein CbrB">
    <location>
        <begin position="1"/>
        <end position="157"/>
    </location>
</feature>
<feature type="topological domain" description="Cytoplasmic" evidence="2">
    <location>
        <begin position="1"/>
        <end position="11"/>
    </location>
</feature>
<feature type="transmembrane region" description="Helical" evidence="2">
    <location>
        <begin position="12"/>
        <end position="32"/>
    </location>
</feature>
<feature type="topological domain" description="Periplasmic" evidence="2">
    <location>
        <begin position="33"/>
        <end position="36"/>
    </location>
</feature>
<feature type="transmembrane region" description="Helical" evidence="2">
    <location>
        <begin position="37"/>
        <end position="57"/>
    </location>
</feature>
<feature type="topological domain" description="Cytoplasmic" evidence="2">
    <location>
        <begin position="58"/>
        <end position="83"/>
    </location>
</feature>
<feature type="transmembrane region" description="Helical" evidence="2">
    <location>
        <begin position="84"/>
        <end position="104"/>
    </location>
</feature>
<feature type="topological domain" description="Periplasmic" evidence="2">
    <location>
        <begin position="105"/>
        <end position="115"/>
    </location>
</feature>
<feature type="transmembrane region" description="Helical" evidence="2">
    <location>
        <begin position="116"/>
        <end position="136"/>
    </location>
</feature>
<feature type="topological domain" description="Cytoplasmic" evidence="2">
    <location>
        <begin position="137"/>
        <end position="157"/>
    </location>
</feature>
<protein>
    <recommendedName>
        <fullName>Inner membrane protein CbrB</fullName>
    </recommendedName>
</protein>
<gene>
    <name type="primary">cbrB</name>
    <name type="ordered locus">EcHS_A3930</name>
</gene>
<name>CBRB_ECOHS</name>
<dbReference type="EMBL" id="CP000802">
    <property type="protein sequence ID" value="ABV08132.1"/>
    <property type="molecule type" value="Genomic_DNA"/>
</dbReference>
<dbReference type="RefSeq" id="WP_000116772.1">
    <property type="nucleotide sequence ID" value="NC_009800.1"/>
</dbReference>
<dbReference type="KEGG" id="ecx:EcHS_A3930"/>
<dbReference type="HOGENOM" id="CLU_139024_0_0_6"/>
<dbReference type="GO" id="GO:0005886">
    <property type="term" value="C:plasma membrane"/>
    <property type="evidence" value="ECO:0007669"/>
    <property type="project" value="UniProtKB-SubCell"/>
</dbReference>
<dbReference type="NCBIfam" id="NF007334">
    <property type="entry name" value="PRK09823.1"/>
    <property type="match status" value="1"/>
</dbReference>
<accession>A8A6H8</accession>
<reference key="1">
    <citation type="journal article" date="2008" name="J. Bacteriol.">
        <title>The pangenome structure of Escherichia coli: comparative genomic analysis of E. coli commensal and pathogenic isolates.</title>
        <authorList>
            <person name="Rasko D.A."/>
            <person name="Rosovitz M.J."/>
            <person name="Myers G.S.A."/>
            <person name="Mongodin E.F."/>
            <person name="Fricke W.F."/>
            <person name="Gajer P."/>
            <person name="Crabtree J."/>
            <person name="Sebaihia M."/>
            <person name="Thomson N.R."/>
            <person name="Chaudhuri R."/>
            <person name="Henderson I.R."/>
            <person name="Sperandio V."/>
            <person name="Ravel J."/>
        </authorList>
    </citation>
    <scope>NUCLEOTIDE SEQUENCE [LARGE SCALE GENOMIC DNA]</scope>
    <source>
        <strain>HS</strain>
    </source>
</reference>
<proteinExistence type="inferred from homology"/>
<organism>
    <name type="scientific">Escherichia coli O9:H4 (strain HS)</name>
    <dbReference type="NCBI Taxonomy" id="331112"/>
    <lineage>
        <taxon>Bacteria</taxon>
        <taxon>Pseudomonadati</taxon>
        <taxon>Pseudomonadota</taxon>
        <taxon>Gammaproteobacteria</taxon>
        <taxon>Enterobacterales</taxon>
        <taxon>Enterobacteriaceae</taxon>
        <taxon>Escherichia</taxon>
    </lineage>
</organism>
<comment type="subcellular location">
    <subcellularLocation>
        <location evidence="1">Cell inner membrane</location>
        <topology evidence="1">Multi-pass membrane protein</topology>
    </subcellularLocation>
</comment>
<comment type="similarity">
    <text evidence="3">Belongs to the CbrB family.</text>
</comment>
<keyword id="KW-0997">Cell inner membrane</keyword>
<keyword id="KW-1003">Cell membrane</keyword>
<keyword id="KW-0472">Membrane</keyword>
<keyword id="KW-0812">Transmembrane</keyword>
<keyword id="KW-1133">Transmembrane helix</keyword>